<accession>Q16JL4</accession>
<organism>
    <name type="scientific">Aedes aegypti</name>
    <name type="common">Yellowfever mosquito</name>
    <name type="synonym">Culex aegypti</name>
    <dbReference type="NCBI Taxonomy" id="7159"/>
    <lineage>
        <taxon>Eukaryota</taxon>
        <taxon>Metazoa</taxon>
        <taxon>Ecdysozoa</taxon>
        <taxon>Arthropoda</taxon>
        <taxon>Hexapoda</taxon>
        <taxon>Insecta</taxon>
        <taxon>Pterygota</taxon>
        <taxon>Neoptera</taxon>
        <taxon>Endopterygota</taxon>
        <taxon>Diptera</taxon>
        <taxon>Nematocera</taxon>
        <taxon>Culicoidea</taxon>
        <taxon>Culicidae</taxon>
        <taxon>Culicinae</taxon>
        <taxon>Aedini</taxon>
        <taxon>Aedes</taxon>
        <taxon>Stegomyia</taxon>
    </lineage>
</organism>
<feature type="chain" id="PRO_0000333211" description="Tetratricopeptide repeat protein 30 homolog">
    <location>
        <begin position="1"/>
        <end position="659"/>
    </location>
</feature>
<feature type="repeat" description="TPR 1">
    <location>
        <begin position="3"/>
        <end position="36"/>
    </location>
</feature>
<feature type="repeat" description="TPR 2">
    <location>
        <begin position="43"/>
        <end position="76"/>
    </location>
</feature>
<feature type="repeat" description="TPR 3">
    <location>
        <begin position="143"/>
        <end position="176"/>
    </location>
</feature>
<feature type="repeat" description="TPR 4">
    <location>
        <begin position="178"/>
        <end position="210"/>
    </location>
</feature>
<feature type="repeat" description="TPR 5">
    <location>
        <begin position="391"/>
        <end position="424"/>
    </location>
</feature>
<feature type="repeat" description="TPR 6">
    <location>
        <begin position="450"/>
        <end position="483"/>
    </location>
</feature>
<feature type="repeat" description="TPR 7">
    <location>
        <begin position="533"/>
        <end position="566"/>
    </location>
</feature>
<proteinExistence type="inferred from homology"/>
<sequence length="659" mass="73170">MFSQNMLIRDGEYTKSIYTMIKEERFQEAINVLNGIPEVSTTRAGLSLLGHCYYQTQDFIEASNCYEYLVNLVPDVPEYKLYYAQSLFQAGLFEEAHKISTTLDAPQLKDKVLQLQSAIAYGNEDYSTAQSLLLQRQDTSQEATVKNDEGCLLFQANMFEDALQRYVSALQAGGFNPHIAYNAALCHYRKKENSQALNYIAEIVERGIRNHPELGVGAQAETEGGARSVGNPPALAASGLAQAFNLKAAIEYQEGNVEGSREALTDLPPRLEPELDPVTLHNMALTDPVGGGAGLRRLAFLLELGPPTCPPETFANLLLLCCKHEMYDTAADILAEHTHLTYKYLSPYMYDLLDALITAQSTPEEAEQKLGVLANNIGGRLRSLAAKVQECRSAPDQNALRVALREYEFALESYLPVAMARAWIPWRADDFQGAEREFRASAEFCSETPTWRLHAAHVLFMRGDRYKEAAAFYEPIVRQNYDDILAVSASVLANLCVAYIMTSQNEEAEELMRKVERAEERKGNANGQCLHLCIVNLVIGTLYCAKGNYEFGLSRIAHALDGGSGARLCADTWLHVKRCVLGLLTGLSKQTIVLPSIAIQETLSFLRTCEAYGLTIPSVLTGPLEETGEQPPTIGLEARKLRALLLRLMEYNNFVSNTW</sequence>
<comment type="function">
    <text evidence="1">Required for polyglutamylation of axonemal tubulin in sensory cilia. Plays a role in anterograde intraflagellar transport (IFT), the process by which cilia precursors are transported from the base of the cilium to the site of their incorporation at the tip.</text>
</comment>
<comment type="subcellular location">
    <subcellularLocation>
        <location evidence="1">Cell projection</location>
        <location evidence="1">Cilium</location>
    </subcellularLocation>
</comment>
<comment type="similarity">
    <text evidence="2">Belongs to the TTC30/dfy-1/fleer family.</text>
</comment>
<name>TTC30_AEDAE</name>
<evidence type="ECO:0000250" key="1"/>
<evidence type="ECO:0000305" key="2"/>
<gene>
    <name type="ORF">AAEL013294</name>
</gene>
<reference key="1">
    <citation type="journal article" date="2007" name="Science">
        <title>Genome sequence of Aedes aegypti, a major arbovirus vector.</title>
        <authorList>
            <person name="Nene V."/>
            <person name="Wortman J.R."/>
            <person name="Lawson D."/>
            <person name="Haas B.J."/>
            <person name="Kodira C.D."/>
            <person name="Tu Z.J."/>
            <person name="Loftus B.J."/>
            <person name="Xi Z."/>
            <person name="Megy K."/>
            <person name="Grabherr M."/>
            <person name="Ren Q."/>
            <person name="Zdobnov E.M."/>
            <person name="Lobo N.F."/>
            <person name="Campbell K.S."/>
            <person name="Brown S.E."/>
            <person name="Bonaldo M.F."/>
            <person name="Zhu J."/>
            <person name="Sinkins S.P."/>
            <person name="Hogenkamp D.G."/>
            <person name="Amedeo P."/>
            <person name="Arensburger P."/>
            <person name="Atkinson P.W."/>
            <person name="Bidwell S.L."/>
            <person name="Biedler J."/>
            <person name="Birney E."/>
            <person name="Bruggner R.V."/>
            <person name="Costas J."/>
            <person name="Coy M.R."/>
            <person name="Crabtree J."/>
            <person name="Crawford M."/>
            <person name="DeBruyn B."/>
            <person name="DeCaprio D."/>
            <person name="Eiglmeier K."/>
            <person name="Eisenstadt E."/>
            <person name="El-Dorry H."/>
            <person name="Gelbart W.M."/>
            <person name="Gomes S.L."/>
            <person name="Hammond M."/>
            <person name="Hannick L.I."/>
            <person name="Hogan J.R."/>
            <person name="Holmes M.H."/>
            <person name="Jaffe D."/>
            <person name="Johnston S.J."/>
            <person name="Kennedy R.C."/>
            <person name="Koo H."/>
            <person name="Kravitz S."/>
            <person name="Kriventseva E.V."/>
            <person name="Kulp D."/>
            <person name="Labutti K."/>
            <person name="Lee E."/>
            <person name="Li S."/>
            <person name="Lovin D.D."/>
            <person name="Mao C."/>
            <person name="Mauceli E."/>
            <person name="Menck C.F."/>
            <person name="Miller J.R."/>
            <person name="Montgomery P."/>
            <person name="Mori A."/>
            <person name="Nascimento A.L."/>
            <person name="Naveira H.F."/>
            <person name="Nusbaum C."/>
            <person name="O'Leary S.B."/>
            <person name="Orvis J."/>
            <person name="Pertea M."/>
            <person name="Quesneville H."/>
            <person name="Reidenbach K.R."/>
            <person name="Rogers Y.-H.C."/>
            <person name="Roth C.W."/>
            <person name="Schneider J.R."/>
            <person name="Schatz M."/>
            <person name="Shumway M."/>
            <person name="Stanke M."/>
            <person name="Stinson E.O."/>
            <person name="Tubio J.M.C."/>
            <person name="Vanzee J.P."/>
            <person name="Verjovski-Almeida S."/>
            <person name="Werner D."/>
            <person name="White O.R."/>
            <person name="Wyder S."/>
            <person name="Zeng Q."/>
            <person name="Zhao Q."/>
            <person name="Zhao Y."/>
            <person name="Hill C.A."/>
            <person name="Raikhel A.S."/>
            <person name="Soares M.B."/>
            <person name="Knudson D.L."/>
            <person name="Lee N.H."/>
            <person name="Galagan J."/>
            <person name="Salzberg S.L."/>
            <person name="Paulsen I.T."/>
            <person name="Dimopoulos G."/>
            <person name="Collins F.H."/>
            <person name="Bruce B."/>
            <person name="Fraser-Liggett C.M."/>
            <person name="Severson D.W."/>
        </authorList>
    </citation>
    <scope>NUCLEOTIDE SEQUENCE [LARGE SCALE GENOMIC DNA]</scope>
    <source>
        <strain>LVPib12</strain>
    </source>
</reference>
<keyword id="KW-0966">Cell projection</keyword>
<keyword id="KW-0969">Cilium</keyword>
<keyword id="KW-0970">Cilium biogenesis/degradation</keyword>
<keyword id="KW-1185">Reference proteome</keyword>
<keyword id="KW-0677">Repeat</keyword>
<keyword id="KW-0802">TPR repeat</keyword>
<dbReference type="EMBL" id="CH478003">
    <property type="protein sequence ID" value="EAT34470.1"/>
    <property type="molecule type" value="Genomic_DNA"/>
</dbReference>
<dbReference type="RefSeq" id="XP_001656578.1">
    <property type="nucleotide sequence ID" value="XM_001656528.1"/>
</dbReference>
<dbReference type="SMR" id="Q16JL4"/>
<dbReference type="FunCoup" id="Q16JL4">
    <property type="interactions" value="46"/>
</dbReference>
<dbReference type="STRING" id="7159.Q16JL4"/>
<dbReference type="PaxDb" id="7159-AAEL013294-PA"/>
<dbReference type="VEuPathDB" id="VectorBase:AAEL021151"/>
<dbReference type="eggNOG" id="KOG4340">
    <property type="taxonomic scope" value="Eukaryota"/>
</dbReference>
<dbReference type="HOGENOM" id="CLU_023760_0_0_1"/>
<dbReference type="InParanoid" id="Q16JL4"/>
<dbReference type="OMA" id="CCKHELY"/>
<dbReference type="PhylomeDB" id="Q16JL4"/>
<dbReference type="Proteomes" id="UP000008820">
    <property type="component" value="Unassembled WGS sequence"/>
</dbReference>
<dbReference type="Proteomes" id="UP000682892">
    <property type="component" value="Unassembled WGS sequence"/>
</dbReference>
<dbReference type="GO" id="GO:0005879">
    <property type="term" value="C:axonemal microtubule"/>
    <property type="evidence" value="ECO:0000250"/>
    <property type="project" value="UniProtKB"/>
</dbReference>
<dbReference type="GO" id="GO:0005929">
    <property type="term" value="C:cilium"/>
    <property type="evidence" value="ECO:0000250"/>
    <property type="project" value="UniProtKB"/>
</dbReference>
<dbReference type="GO" id="GO:0030992">
    <property type="term" value="C:intraciliary transport particle B"/>
    <property type="evidence" value="ECO:0007669"/>
    <property type="project" value="TreeGrafter"/>
</dbReference>
<dbReference type="GO" id="GO:0120170">
    <property type="term" value="F:intraciliary transport particle B binding"/>
    <property type="evidence" value="ECO:0007669"/>
    <property type="project" value="TreeGrafter"/>
</dbReference>
<dbReference type="GO" id="GO:0042073">
    <property type="term" value="P:intraciliary transport"/>
    <property type="evidence" value="ECO:0000250"/>
    <property type="project" value="UniProtKB"/>
</dbReference>
<dbReference type="GO" id="GO:0018095">
    <property type="term" value="P:protein polyglutamylation"/>
    <property type="evidence" value="ECO:0000250"/>
    <property type="project" value="UniProtKB"/>
</dbReference>
<dbReference type="FunFam" id="1.25.40.10:FF:000693">
    <property type="entry name" value="Tetratricopeptide repeat domain 30A"/>
    <property type="match status" value="1"/>
</dbReference>
<dbReference type="FunFam" id="1.25.40.10:FF:001446">
    <property type="entry name" value="Tetratricopeptide repeat protein 30 homolog"/>
    <property type="match status" value="1"/>
</dbReference>
<dbReference type="Gene3D" id="1.25.40.10">
    <property type="entry name" value="Tetratricopeptide repeat domain"/>
    <property type="match status" value="3"/>
</dbReference>
<dbReference type="InterPro" id="IPR011990">
    <property type="entry name" value="TPR-like_helical_dom_sf"/>
</dbReference>
<dbReference type="InterPro" id="IPR019734">
    <property type="entry name" value="TPR_rpt"/>
</dbReference>
<dbReference type="InterPro" id="IPR039941">
    <property type="entry name" value="TT30"/>
</dbReference>
<dbReference type="PANTHER" id="PTHR20931">
    <property type="entry name" value="TETRATRICOPEPTIDE REPEAT PROTEIN 30"/>
    <property type="match status" value="1"/>
</dbReference>
<dbReference type="PANTHER" id="PTHR20931:SF0">
    <property type="entry name" value="TETRATRICOPEPTIDE REPEAT PROTEIN 30"/>
    <property type="match status" value="1"/>
</dbReference>
<dbReference type="Pfam" id="PF13432">
    <property type="entry name" value="TPR_16"/>
    <property type="match status" value="1"/>
</dbReference>
<dbReference type="SMART" id="SM00028">
    <property type="entry name" value="TPR"/>
    <property type="match status" value="3"/>
</dbReference>
<dbReference type="SUPFAM" id="SSF48452">
    <property type="entry name" value="TPR-like"/>
    <property type="match status" value="3"/>
</dbReference>
<protein>
    <recommendedName>
        <fullName>Tetratricopeptide repeat protein 30 homolog</fullName>
        <shortName>TPR repeat protein 30 homolog</shortName>
    </recommendedName>
</protein>